<organism>
    <name type="scientific">Granulibacter bethesdensis (strain ATCC BAA-1260 / CGDNIH1)</name>
    <dbReference type="NCBI Taxonomy" id="391165"/>
    <lineage>
        <taxon>Bacteria</taxon>
        <taxon>Pseudomonadati</taxon>
        <taxon>Pseudomonadota</taxon>
        <taxon>Alphaproteobacteria</taxon>
        <taxon>Acetobacterales</taxon>
        <taxon>Acetobacteraceae</taxon>
        <taxon>Granulibacter</taxon>
    </lineage>
</organism>
<dbReference type="EC" id="1.17.7.3" evidence="1"/>
<dbReference type="EMBL" id="CP000394">
    <property type="protein sequence ID" value="ABI61502.1"/>
    <property type="molecule type" value="Genomic_DNA"/>
</dbReference>
<dbReference type="RefSeq" id="WP_011631311.1">
    <property type="nucleotide sequence ID" value="NC_008343.2"/>
</dbReference>
<dbReference type="SMR" id="Q0BUK0"/>
<dbReference type="STRING" id="391165.GbCGDNIH1_0604"/>
<dbReference type="GeneID" id="69744858"/>
<dbReference type="KEGG" id="gbe:GbCGDNIH1_0604"/>
<dbReference type="eggNOG" id="COG0821">
    <property type="taxonomic scope" value="Bacteria"/>
</dbReference>
<dbReference type="HOGENOM" id="CLU_042258_0_0_5"/>
<dbReference type="OrthoDB" id="9803214at2"/>
<dbReference type="UniPathway" id="UPA00056">
    <property type="reaction ID" value="UER00096"/>
</dbReference>
<dbReference type="Proteomes" id="UP000001963">
    <property type="component" value="Chromosome"/>
</dbReference>
<dbReference type="GO" id="GO:0051539">
    <property type="term" value="F:4 iron, 4 sulfur cluster binding"/>
    <property type="evidence" value="ECO:0007669"/>
    <property type="project" value="UniProtKB-UniRule"/>
</dbReference>
<dbReference type="GO" id="GO:0046429">
    <property type="term" value="F:4-hydroxy-3-methylbut-2-en-1-yl diphosphate synthase activity (ferredoxin)"/>
    <property type="evidence" value="ECO:0007669"/>
    <property type="project" value="UniProtKB-UniRule"/>
</dbReference>
<dbReference type="GO" id="GO:0141197">
    <property type="term" value="F:4-hydroxy-3-methylbut-2-enyl-diphosphate synthase activity (flavodoxin)"/>
    <property type="evidence" value="ECO:0007669"/>
    <property type="project" value="UniProtKB-EC"/>
</dbReference>
<dbReference type="GO" id="GO:0005506">
    <property type="term" value="F:iron ion binding"/>
    <property type="evidence" value="ECO:0007669"/>
    <property type="project" value="InterPro"/>
</dbReference>
<dbReference type="GO" id="GO:0019288">
    <property type="term" value="P:isopentenyl diphosphate biosynthetic process, methylerythritol 4-phosphate pathway"/>
    <property type="evidence" value="ECO:0007669"/>
    <property type="project" value="UniProtKB-UniRule"/>
</dbReference>
<dbReference type="GO" id="GO:0016114">
    <property type="term" value="P:terpenoid biosynthetic process"/>
    <property type="evidence" value="ECO:0007669"/>
    <property type="project" value="InterPro"/>
</dbReference>
<dbReference type="FunFam" id="3.20.20.20:FF:000001">
    <property type="entry name" value="4-hydroxy-3-methylbut-2-en-1-yl diphosphate synthase (flavodoxin)"/>
    <property type="match status" value="1"/>
</dbReference>
<dbReference type="Gene3D" id="3.20.20.20">
    <property type="entry name" value="Dihydropteroate synthase-like"/>
    <property type="match status" value="1"/>
</dbReference>
<dbReference type="Gene3D" id="3.30.413.10">
    <property type="entry name" value="Sulfite Reductase Hemoprotein, domain 1"/>
    <property type="match status" value="1"/>
</dbReference>
<dbReference type="HAMAP" id="MF_00159">
    <property type="entry name" value="IspG"/>
    <property type="match status" value="1"/>
</dbReference>
<dbReference type="InterPro" id="IPR011005">
    <property type="entry name" value="Dihydropteroate_synth-like_sf"/>
</dbReference>
<dbReference type="InterPro" id="IPR016425">
    <property type="entry name" value="IspG_bac"/>
</dbReference>
<dbReference type="InterPro" id="IPR004588">
    <property type="entry name" value="IspG_bac-typ"/>
</dbReference>
<dbReference type="InterPro" id="IPR045854">
    <property type="entry name" value="NO2/SO3_Rdtase_4Fe4S_sf"/>
</dbReference>
<dbReference type="NCBIfam" id="TIGR00612">
    <property type="entry name" value="ispG_gcpE"/>
    <property type="match status" value="1"/>
</dbReference>
<dbReference type="NCBIfam" id="NF001540">
    <property type="entry name" value="PRK00366.1"/>
    <property type="match status" value="1"/>
</dbReference>
<dbReference type="PANTHER" id="PTHR30454">
    <property type="entry name" value="4-HYDROXY-3-METHYLBUT-2-EN-1-YL DIPHOSPHATE SYNTHASE"/>
    <property type="match status" value="1"/>
</dbReference>
<dbReference type="PANTHER" id="PTHR30454:SF0">
    <property type="entry name" value="4-HYDROXY-3-METHYLBUT-2-EN-1-YL DIPHOSPHATE SYNTHASE (FERREDOXIN), CHLOROPLASTIC"/>
    <property type="match status" value="1"/>
</dbReference>
<dbReference type="Pfam" id="PF04551">
    <property type="entry name" value="GcpE"/>
    <property type="match status" value="1"/>
</dbReference>
<dbReference type="PIRSF" id="PIRSF004640">
    <property type="entry name" value="IspG"/>
    <property type="match status" value="1"/>
</dbReference>
<dbReference type="SUPFAM" id="SSF51412">
    <property type="entry name" value="Inosine monophosphate dehydrogenase (IMPDH)"/>
    <property type="match status" value="1"/>
</dbReference>
<dbReference type="SUPFAM" id="SSF56014">
    <property type="entry name" value="Nitrite and sulphite reductase 4Fe-4S domain-like"/>
    <property type="match status" value="1"/>
</dbReference>
<accession>Q0BUK0</accession>
<sequence length="387" mass="41473">MSYRPYQQIERRKSRQIHVGKVAVGGDAPISVQTMTNTLTTDAEATIAQIRRAELAGVDIVRVSCPDQESTIALKEIVREVNVPIVADIHFHYRRAIEAAEAGAACLRINPGNIGSAERVREVVKAARDHGCAIRIGVNAGSLERHLLEKYGEPNPDALVESALEHAKILQDHDFHEFKISVKASDVFLAVAAYQQLAEVCDHPLHIGITEAGGRRTGTVKSAIGLGNLLWAGVGDTMRVSLSAEPEEEVHVGWEILKGLGLRHRGVKIISCPSCARQGFNVIETVAALEERLAHIQTPLTLSIIGCVVNGPGEALMTDIGLTGGGGGRHMIYNAGKTDHTIAADGMVDHIVTLVEEKAARIVEEEAAAKAAAEQAAQEAALQHETV</sequence>
<evidence type="ECO:0000255" key="1">
    <source>
        <dbReference type="HAMAP-Rule" id="MF_00159"/>
    </source>
</evidence>
<comment type="function">
    <text evidence="1">Converts 2C-methyl-D-erythritol 2,4-cyclodiphosphate (ME-2,4cPP) into 1-hydroxy-2-methyl-2-(E)-butenyl 4-diphosphate.</text>
</comment>
<comment type="catalytic activity">
    <reaction evidence="1">
        <text>(2E)-4-hydroxy-3-methylbut-2-enyl diphosphate + oxidized [flavodoxin] + H2O + 2 H(+) = 2-C-methyl-D-erythritol 2,4-cyclic diphosphate + reduced [flavodoxin]</text>
        <dbReference type="Rhea" id="RHEA:43604"/>
        <dbReference type="Rhea" id="RHEA-COMP:10622"/>
        <dbReference type="Rhea" id="RHEA-COMP:10623"/>
        <dbReference type="ChEBI" id="CHEBI:15377"/>
        <dbReference type="ChEBI" id="CHEBI:15378"/>
        <dbReference type="ChEBI" id="CHEBI:57618"/>
        <dbReference type="ChEBI" id="CHEBI:58210"/>
        <dbReference type="ChEBI" id="CHEBI:58483"/>
        <dbReference type="ChEBI" id="CHEBI:128753"/>
        <dbReference type="EC" id="1.17.7.3"/>
    </reaction>
</comment>
<comment type="cofactor">
    <cofactor evidence="1">
        <name>[4Fe-4S] cluster</name>
        <dbReference type="ChEBI" id="CHEBI:49883"/>
    </cofactor>
    <text evidence="1">Binds 1 [4Fe-4S] cluster.</text>
</comment>
<comment type="pathway">
    <text evidence="1">Isoprenoid biosynthesis; isopentenyl diphosphate biosynthesis via DXP pathway; isopentenyl diphosphate from 1-deoxy-D-xylulose 5-phosphate: step 5/6.</text>
</comment>
<comment type="similarity">
    <text evidence="1">Belongs to the IspG family.</text>
</comment>
<protein>
    <recommendedName>
        <fullName evidence="1">4-hydroxy-3-methylbut-2-en-1-yl diphosphate synthase (flavodoxin)</fullName>
        <ecNumber evidence="1">1.17.7.3</ecNumber>
    </recommendedName>
    <alternativeName>
        <fullName evidence="1">1-hydroxy-2-methyl-2-(E)-butenyl 4-diphosphate synthase</fullName>
    </alternativeName>
</protein>
<feature type="chain" id="PRO_1000203505" description="4-hydroxy-3-methylbut-2-en-1-yl diphosphate synthase (flavodoxin)">
    <location>
        <begin position="1"/>
        <end position="387"/>
    </location>
</feature>
<feature type="binding site" evidence="1">
    <location>
        <position position="272"/>
    </location>
    <ligand>
        <name>[4Fe-4S] cluster</name>
        <dbReference type="ChEBI" id="CHEBI:49883"/>
    </ligand>
</feature>
<feature type="binding site" evidence="1">
    <location>
        <position position="275"/>
    </location>
    <ligand>
        <name>[4Fe-4S] cluster</name>
        <dbReference type="ChEBI" id="CHEBI:49883"/>
    </ligand>
</feature>
<feature type="binding site" evidence="1">
    <location>
        <position position="307"/>
    </location>
    <ligand>
        <name>[4Fe-4S] cluster</name>
        <dbReference type="ChEBI" id="CHEBI:49883"/>
    </ligand>
</feature>
<feature type="binding site" evidence="1">
    <location>
        <position position="314"/>
    </location>
    <ligand>
        <name>[4Fe-4S] cluster</name>
        <dbReference type="ChEBI" id="CHEBI:49883"/>
    </ligand>
</feature>
<keyword id="KW-0004">4Fe-4S</keyword>
<keyword id="KW-0408">Iron</keyword>
<keyword id="KW-0411">Iron-sulfur</keyword>
<keyword id="KW-0414">Isoprene biosynthesis</keyword>
<keyword id="KW-0479">Metal-binding</keyword>
<keyword id="KW-0560">Oxidoreductase</keyword>
<keyword id="KW-1185">Reference proteome</keyword>
<gene>
    <name evidence="1" type="primary">ispG</name>
    <name type="ordered locus">GbCGDNIH1_0604</name>
</gene>
<reference key="1">
    <citation type="journal article" date="2007" name="J. Bacteriol.">
        <title>Genome sequence analysis of the emerging human pathogenic acetic acid bacterium Granulibacter bethesdensis.</title>
        <authorList>
            <person name="Greenberg D.E."/>
            <person name="Porcella S.F."/>
            <person name="Zelazny A.M."/>
            <person name="Virtaneva K."/>
            <person name="Sturdevant D.E."/>
            <person name="Kupko J.J. III"/>
            <person name="Barbian K.D."/>
            <person name="Babar A."/>
            <person name="Dorward D.W."/>
            <person name="Holland S.M."/>
        </authorList>
    </citation>
    <scope>NUCLEOTIDE SEQUENCE [LARGE SCALE GENOMIC DNA]</scope>
    <source>
        <strain>ATCC BAA-1260 / CGDNIH1</strain>
    </source>
</reference>
<name>ISPG_GRABC</name>
<proteinExistence type="inferred from homology"/>